<gene>
    <name evidence="1" type="primary">cutC</name>
    <name type="ordered locus">CCNA_02445</name>
</gene>
<protein>
    <recommendedName>
        <fullName evidence="1">PF03932 family protein CutC</fullName>
    </recommendedName>
</protein>
<accession>B8GZC1</accession>
<proteinExistence type="inferred from homology"/>
<dbReference type="EMBL" id="CP001340">
    <property type="protein sequence ID" value="ACL95910.1"/>
    <property type="molecule type" value="Genomic_DNA"/>
</dbReference>
<dbReference type="RefSeq" id="WP_010920218.1">
    <property type="nucleotide sequence ID" value="NC_011916.1"/>
</dbReference>
<dbReference type="RefSeq" id="YP_002517818.1">
    <property type="nucleotide sequence ID" value="NC_011916.1"/>
</dbReference>
<dbReference type="SMR" id="B8GZC1"/>
<dbReference type="GeneID" id="7331680"/>
<dbReference type="KEGG" id="ccs:CCNA_02445"/>
<dbReference type="PATRIC" id="fig|565050.3.peg.2398"/>
<dbReference type="HOGENOM" id="CLU_050555_3_3_5"/>
<dbReference type="OrthoDB" id="9815677at2"/>
<dbReference type="PhylomeDB" id="B8GZC1"/>
<dbReference type="Proteomes" id="UP000001364">
    <property type="component" value="Chromosome"/>
</dbReference>
<dbReference type="GO" id="GO:0005737">
    <property type="term" value="C:cytoplasm"/>
    <property type="evidence" value="ECO:0007669"/>
    <property type="project" value="UniProtKB-SubCell"/>
</dbReference>
<dbReference type="GO" id="GO:0005507">
    <property type="term" value="F:copper ion binding"/>
    <property type="evidence" value="ECO:0007669"/>
    <property type="project" value="TreeGrafter"/>
</dbReference>
<dbReference type="Gene3D" id="3.20.20.380">
    <property type="entry name" value="Copper homeostasis (CutC) domain"/>
    <property type="match status" value="1"/>
</dbReference>
<dbReference type="HAMAP" id="MF_00795">
    <property type="entry name" value="CutC"/>
    <property type="match status" value="1"/>
</dbReference>
<dbReference type="InterPro" id="IPR005627">
    <property type="entry name" value="CutC-like"/>
</dbReference>
<dbReference type="InterPro" id="IPR036822">
    <property type="entry name" value="CutC-like_dom_sf"/>
</dbReference>
<dbReference type="PANTHER" id="PTHR12598">
    <property type="entry name" value="COPPER HOMEOSTASIS PROTEIN CUTC"/>
    <property type="match status" value="1"/>
</dbReference>
<dbReference type="PANTHER" id="PTHR12598:SF0">
    <property type="entry name" value="COPPER HOMEOSTASIS PROTEIN CUTC HOMOLOG"/>
    <property type="match status" value="1"/>
</dbReference>
<dbReference type="Pfam" id="PF03932">
    <property type="entry name" value="CutC"/>
    <property type="match status" value="1"/>
</dbReference>
<dbReference type="SUPFAM" id="SSF110395">
    <property type="entry name" value="CutC-like"/>
    <property type="match status" value="1"/>
</dbReference>
<evidence type="ECO:0000255" key="1">
    <source>
        <dbReference type="HAMAP-Rule" id="MF_00795"/>
    </source>
</evidence>
<name>CUTC_CAUVN</name>
<sequence length="245" mass="25306">MSAHRVLLEVCVDTPAGLAAAIAGGADRVELCSALALQGLTPAPGLMAQAASAPIPVYPMIRPRHGDFCYDARDLDAMRRDIDAVRGYGLPGVTIGASQANGALDLKVLRKLVEQAEGLGTTLHRAFDVVPDMSEALEIAVELGFERVLTSGGALSALDATDRLAALVEQAGERISIMAGAGVRPGNIAELVRRTGVREAHGSFGGPVPGADPRSQLGAMGFVPPELRDTSQAAVAEAVKALRAL</sequence>
<keyword id="KW-0963">Cytoplasm</keyword>
<keyword id="KW-1185">Reference proteome</keyword>
<feature type="chain" id="PRO_1000148513" description="PF03932 family protein CutC">
    <location>
        <begin position="1"/>
        <end position="245"/>
    </location>
</feature>
<organism>
    <name type="scientific">Caulobacter vibrioides (strain NA1000 / CB15N)</name>
    <name type="common">Caulobacter crescentus</name>
    <dbReference type="NCBI Taxonomy" id="565050"/>
    <lineage>
        <taxon>Bacteria</taxon>
        <taxon>Pseudomonadati</taxon>
        <taxon>Pseudomonadota</taxon>
        <taxon>Alphaproteobacteria</taxon>
        <taxon>Caulobacterales</taxon>
        <taxon>Caulobacteraceae</taxon>
        <taxon>Caulobacter</taxon>
    </lineage>
</organism>
<comment type="subcellular location">
    <subcellularLocation>
        <location evidence="1">Cytoplasm</location>
    </subcellularLocation>
</comment>
<comment type="similarity">
    <text evidence="1">Belongs to the CutC family.</text>
</comment>
<comment type="caution">
    <text evidence="1">Once thought to be involved in copper homeostasis, experiments in E.coli have shown this is not the case.</text>
</comment>
<reference key="1">
    <citation type="journal article" date="2010" name="J. Bacteriol.">
        <title>The genetic basis of laboratory adaptation in Caulobacter crescentus.</title>
        <authorList>
            <person name="Marks M.E."/>
            <person name="Castro-Rojas C.M."/>
            <person name="Teiling C."/>
            <person name="Du L."/>
            <person name="Kapatral V."/>
            <person name="Walunas T.L."/>
            <person name="Crosson S."/>
        </authorList>
    </citation>
    <scope>NUCLEOTIDE SEQUENCE [LARGE SCALE GENOMIC DNA]</scope>
    <source>
        <strain>NA1000 / CB15N</strain>
    </source>
</reference>